<keyword id="KW-0002">3D-structure</keyword>
<keyword id="KW-0903">Direct protein sequencing</keyword>
<keyword id="KW-0249">Electron transport</keyword>
<keyword id="KW-0349">Heme</keyword>
<keyword id="KW-0408">Iron</keyword>
<keyword id="KW-0479">Metal-binding</keyword>
<keyword id="KW-0574">Periplasm</keyword>
<keyword id="KW-0732">Signal</keyword>
<keyword id="KW-0813">Transport</keyword>
<evidence type="ECO:0000255" key="1">
    <source>
        <dbReference type="PROSITE-ProRule" id="PRU00433"/>
    </source>
</evidence>
<evidence type="ECO:0000269" key="2">
    <source>
    </source>
</evidence>
<evidence type="ECO:0007829" key="3">
    <source>
        <dbReference type="PDB" id="1CCH"/>
    </source>
</evidence>
<reference key="1">
    <citation type="journal article" date="1991" name="FEBS Lett.">
        <title>The nirSTBM region coding for cytochrome cd1-dependent nitrite respiration of Pseudomonas stutzeri consists of a cluster of mono-, di-, and tetraheme proteins.</title>
        <authorList>
            <person name="Juengst A."/>
            <person name="Wakabayashi S."/>
            <person name="Matsubara H."/>
            <person name="Zumft W.G."/>
        </authorList>
    </citation>
    <scope>NUCLEOTIDE SEQUENCE [GENOMIC DNA]</scope>
    <source>
        <strain>ATCC 14405 / JCM 20778 / CIP 107696 / IAM 12931 / LMG 2243 / NCIMB 568 / Baumann 218 / ZoBell 632</strain>
    </source>
</reference>
<reference key="2">
    <citation type="journal article" date="1973" name="Biochem. J.">
        <title>The amino acid sequences of cytochromes c-551 from three species of Pseudomonas.</title>
        <authorList>
            <person name="Ambler R.P."/>
            <person name="Wynn M."/>
        </authorList>
    </citation>
    <scope>PROTEIN SEQUENCE OF 23-104</scope>
    <source>
        <strain>221</strain>
    </source>
</reference>
<reference key="3">
    <citation type="journal article" date="1992" name="Biochemistry">
        <title>Investigation of the solution conformation of cytochrome c-551 from Pseudomonas stutzeri.</title>
        <authorList>
            <person name="Cai M."/>
            <person name="Bradford E.G."/>
            <person name="Timkovich R."/>
        </authorList>
    </citation>
    <scope>STRUCTURE BY NMR</scope>
    <source>
        <strain>ATCC 17588 / LMG 11199 / NCIMB 11358 / Stanier 221</strain>
    </source>
</reference>
<reference key="4">
    <citation type="journal article" date="1994" name="Biophys. J.">
        <title>Solution conformation of cytochrome c-551 from Pseudomonas stutzeri ZoBell determined by NMR.</title>
        <authorList>
            <person name="Cai M."/>
            <person name="Timkovich R."/>
        </authorList>
    </citation>
    <scope>STRUCTURE BY NMR</scope>
    <source>
        <strain>ATCC 14405 / JCM 20778 / CIP 107696 / IAM 12931 / LMG 2243 / NCIMB 568 / Baumann 218 / ZoBell 632</strain>
    </source>
</reference>
<sequence>MKKILIPMLALGGALAMQPALAQDGEALFKSKPCAACHSVDTKMVGPALKEVAAKNAGVEGAADTLALHIKNGSQGVWGPIPMPPNPVTEEEAKILAEWVLSLK</sequence>
<protein>
    <recommendedName>
        <fullName>Cytochrome c-551</fullName>
    </recommendedName>
    <alternativeName>
        <fullName>Cytochrome C8</fullName>
    </alternativeName>
    <alternativeName>
        <fullName>Cytochrome c551</fullName>
    </alternativeName>
</protein>
<organism>
    <name type="scientific">Stutzerimonas stutzeri</name>
    <name type="common">Pseudomonas stutzeri</name>
    <dbReference type="NCBI Taxonomy" id="316"/>
    <lineage>
        <taxon>Bacteria</taxon>
        <taxon>Pseudomonadati</taxon>
        <taxon>Pseudomonadota</taxon>
        <taxon>Gammaproteobacteria</taxon>
        <taxon>Pseudomonadales</taxon>
        <taxon>Pseudomonadaceae</taxon>
        <taxon>Stutzerimonas</taxon>
    </lineage>
</organism>
<accession>P00101</accession>
<accession>P24036</accession>
<name>CY551_STUST</name>
<dbReference type="EMBL" id="X53676">
    <property type="protein sequence ID" value="CAA40153.1"/>
    <property type="molecule type" value="Genomic_DNA"/>
</dbReference>
<dbReference type="PIR" id="A00093">
    <property type="entry name" value="CCPS5S"/>
</dbReference>
<dbReference type="PIR" id="S13939">
    <property type="entry name" value="CCPS5B"/>
</dbReference>
<dbReference type="RefSeq" id="WP_003279940.1">
    <property type="nucleotide sequence ID" value="NZ_CP036186.1"/>
</dbReference>
<dbReference type="PDB" id="1CCH">
    <property type="method" value="NMR"/>
    <property type="chains" value="A=23-104"/>
</dbReference>
<dbReference type="PDB" id="1COR">
    <property type="method" value="NMR"/>
    <property type="chains" value="A=24-104"/>
</dbReference>
<dbReference type="PDB" id="1FI3">
    <property type="method" value="NMR"/>
    <property type="chains" value="A=23-104"/>
</dbReference>
<dbReference type="PDB" id="2I8F">
    <property type="method" value="NMR"/>
    <property type="chains" value="A=23-104"/>
</dbReference>
<dbReference type="PDBsum" id="1CCH"/>
<dbReference type="PDBsum" id="1COR"/>
<dbReference type="PDBsum" id="1FI3"/>
<dbReference type="PDBsum" id="2I8F"/>
<dbReference type="BMRB" id="P00101"/>
<dbReference type="SMR" id="P00101"/>
<dbReference type="DrugBank" id="DB03317">
    <property type="generic name" value="Ferroheme C"/>
</dbReference>
<dbReference type="OrthoDB" id="9814063at2"/>
<dbReference type="EvolutionaryTrace" id="P00101"/>
<dbReference type="GO" id="GO:0042597">
    <property type="term" value="C:periplasmic space"/>
    <property type="evidence" value="ECO:0007669"/>
    <property type="project" value="UniProtKB-SubCell"/>
</dbReference>
<dbReference type="GO" id="GO:0009055">
    <property type="term" value="F:electron transfer activity"/>
    <property type="evidence" value="ECO:0007669"/>
    <property type="project" value="InterPro"/>
</dbReference>
<dbReference type="GO" id="GO:0020037">
    <property type="term" value="F:heme binding"/>
    <property type="evidence" value="ECO:0007669"/>
    <property type="project" value="InterPro"/>
</dbReference>
<dbReference type="GO" id="GO:0005506">
    <property type="term" value="F:iron ion binding"/>
    <property type="evidence" value="ECO:0007669"/>
    <property type="project" value="InterPro"/>
</dbReference>
<dbReference type="Gene3D" id="1.10.760.10">
    <property type="entry name" value="Cytochrome c-like domain"/>
    <property type="match status" value="1"/>
</dbReference>
<dbReference type="InterPro" id="IPR009056">
    <property type="entry name" value="Cyt_c-like_dom"/>
</dbReference>
<dbReference type="InterPro" id="IPR036909">
    <property type="entry name" value="Cyt_c-like_dom_sf"/>
</dbReference>
<dbReference type="InterPro" id="IPR002324">
    <property type="entry name" value="Cyt_c_ID"/>
</dbReference>
<dbReference type="Pfam" id="PF00034">
    <property type="entry name" value="Cytochrom_C"/>
    <property type="match status" value="1"/>
</dbReference>
<dbReference type="PRINTS" id="PR00606">
    <property type="entry name" value="CYTCHROMECID"/>
</dbReference>
<dbReference type="SUPFAM" id="SSF46626">
    <property type="entry name" value="Cytochrome c"/>
    <property type="match status" value="1"/>
</dbReference>
<dbReference type="PROSITE" id="PS51007">
    <property type="entry name" value="CYTC"/>
    <property type="match status" value="1"/>
</dbReference>
<feature type="signal peptide" evidence="2">
    <location>
        <begin position="1"/>
        <end position="22"/>
    </location>
</feature>
<feature type="chain" id="PRO_0000006528" description="Cytochrome c-551">
    <location>
        <begin position="23"/>
        <end position="104"/>
    </location>
</feature>
<feature type="binding site" description="covalent" evidence="1">
    <location>
        <position position="34"/>
    </location>
    <ligand>
        <name>heme c</name>
        <dbReference type="ChEBI" id="CHEBI:61717"/>
    </ligand>
</feature>
<feature type="binding site" description="covalent" evidence="1">
    <location>
        <position position="37"/>
    </location>
    <ligand>
        <name>heme c</name>
        <dbReference type="ChEBI" id="CHEBI:61717"/>
    </ligand>
</feature>
<feature type="binding site" description="axial binding residue" evidence="1">
    <location>
        <position position="38"/>
    </location>
    <ligand>
        <name>heme c</name>
        <dbReference type="ChEBI" id="CHEBI:61717"/>
    </ligand>
    <ligandPart>
        <name>Fe</name>
        <dbReference type="ChEBI" id="CHEBI:18248"/>
    </ligandPart>
</feature>
<feature type="binding site" description="axial binding residue" evidence="1">
    <location>
        <position position="83"/>
    </location>
    <ligand>
        <name>heme c</name>
        <dbReference type="ChEBI" id="CHEBI:61717"/>
    </ligand>
    <ligandPart>
        <name>Fe</name>
        <dbReference type="ChEBI" id="CHEBI:18248"/>
    </ligandPart>
</feature>
<feature type="sequence variant" description="In strain: 221.">
    <original>V</original>
    <variation>I</variation>
    <location>
        <position position="40"/>
    </location>
</feature>
<feature type="sequence variant" description="In strain: 221.">
    <original>T</original>
    <variation>A</variation>
    <location>
        <position position="42"/>
    </location>
</feature>
<feature type="sequence variant" description="In strain: 221.">
    <original>M</original>
    <variation>L</variation>
    <location>
        <position position="44"/>
    </location>
</feature>
<feature type="sequence variant" description="In strain: 221.">
    <original>L</original>
    <variation>F</variation>
    <location>
        <position position="49"/>
    </location>
</feature>
<feature type="sequence variant" description="In strain: 221.">
    <original>N</original>
    <variation>Y</variation>
    <location>
        <position position="56"/>
    </location>
</feature>
<feature type="sequence variant" description="In strain: 221.">
    <original>VE</original>
    <variation>QD</variation>
    <location>
        <begin position="59"/>
        <end position="60"/>
    </location>
</feature>
<feature type="sequence variant" description="In strain: 221.">
    <original>T</original>
    <variation>L</variation>
    <location>
        <position position="65"/>
    </location>
</feature>
<feature type="sequence variant" description="In strain: 221.">
    <original>L</original>
    <variation>G</variation>
    <location>
        <position position="68"/>
    </location>
</feature>
<feature type="sequence variant" description="In strain: 221.">
    <original>V</original>
    <variation>I</variation>
    <location>
        <position position="100"/>
    </location>
</feature>
<feature type="sequence variant" description="In strain: 221.">
    <original>L</original>
    <variation>Q</variation>
    <location>
        <position position="103"/>
    </location>
</feature>
<feature type="helix" evidence="3">
    <location>
        <begin position="26"/>
        <end position="31"/>
    </location>
</feature>
<feature type="helix" evidence="3">
    <location>
        <begin position="34"/>
        <end position="37"/>
    </location>
</feature>
<feature type="strand" evidence="3">
    <location>
        <begin position="40"/>
        <end position="42"/>
    </location>
</feature>
<feature type="strand" evidence="3">
    <location>
        <begin position="44"/>
        <end position="46"/>
    </location>
</feature>
<feature type="helix" evidence="3">
    <location>
        <begin position="49"/>
        <end position="55"/>
    </location>
</feature>
<feature type="strand" evidence="3">
    <location>
        <begin position="56"/>
        <end position="58"/>
    </location>
</feature>
<feature type="helix" evidence="3">
    <location>
        <begin position="60"/>
        <end position="62"/>
    </location>
</feature>
<feature type="helix" evidence="3">
    <location>
        <begin position="63"/>
        <end position="71"/>
    </location>
</feature>
<feature type="strand" evidence="3">
    <location>
        <begin position="76"/>
        <end position="80"/>
    </location>
</feature>
<feature type="helix" evidence="3">
    <location>
        <begin position="90"/>
        <end position="102"/>
    </location>
</feature>
<comment type="function">
    <text>Electron donor for cytochrome cd1 in nitrite and nitrate respiration.</text>
</comment>
<comment type="subcellular location">
    <subcellularLocation>
        <location>Periplasm</location>
    </subcellularLocation>
</comment>
<comment type="PTM">
    <text>Binds 1 heme c group covalently per subunit.</text>
</comment>
<gene>
    <name type="primary">nirM</name>
</gene>
<proteinExistence type="evidence at protein level"/>